<sequence length="187" mass="21025">MAIIVEDGSFITSSQWENVEASPKPPPRKPKIVQPKKKPSKHLSNEDALEKYEMLFGERRKEVELDYMSHIAEEETSLSMIEYDRHFALQTDVKLSKKRKSKLVEMTPKGLKKRKRVQIQEGSVSTNTKKRMDGHVVGSSAPAINNGKGKQLLEMMGWSRGKGLGSENQGMVDPVVAVVKNNKQGLH</sequence>
<protein>
    <recommendedName>
        <fullName>Meiotically up-regulated protein C1442.13c</fullName>
    </recommendedName>
    <alternativeName>
        <fullName>Meiotic chromosome segregation protein C1442.13c</fullName>
    </alternativeName>
</protein>
<organism>
    <name type="scientific">Schizosaccharomyces pombe (strain 972 / ATCC 24843)</name>
    <name type="common">Fission yeast</name>
    <dbReference type="NCBI Taxonomy" id="284812"/>
    <lineage>
        <taxon>Eukaryota</taxon>
        <taxon>Fungi</taxon>
        <taxon>Dikarya</taxon>
        <taxon>Ascomycota</taxon>
        <taxon>Taphrinomycotina</taxon>
        <taxon>Schizosaccharomycetes</taxon>
        <taxon>Schizosaccharomycetales</taxon>
        <taxon>Schizosaccharomycetaceae</taxon>
        <taxon>Schizosaccharomyces</taxon>
    </lineage>
</organism>
<comment type="function">
    <text evidence="3 4">Has a role in meiosis and sporulation. Required for meiotic chromosome segregation.</text>
</comment>
<comment type="subcellular location">
    <subcellularLocation>
        <location evidence="5">Nucleus</location>
    </subcellularLocation>
    <subcellularLocation>
        <location evidence="5">Cytoplasm</location>
        <location evidence="5">Cytoskeleton</location>
        <location evidence="5">Microtubule organizing center</location>
        <location evidence="5">Spindle pole body</location>
    </subcellularLocation>
</comment>
<reference key="1">
    <citation type="journal article" date="2002" name="Nature">
        <title>The genome sequence of Schizosaccharomyces pombe.</title>
        <authorList>
            <person name="Wood V."/>
            <person name="Gwilliam R."/>
            <person name="Rajandream M.A."/>
            <person name="Lyne M.H."/>
            <person name="Lyne R."/>
            <person name="Stewart A."/>
            <person name="Sgouros J.G."/>
            <person name="Peat N."/>
            <person name="Hayles J."/>
            <person name="Baker S.G."/>
            <person name="Basham D."/>
            <person name="Bowman S."/>
            <person name="Brooks K."/>
            <person name="Brown D."/>
            <person name="Brown S."/>
            <person name="Chillingworth T."/>
            <person name="Churcher C.M."/>
            <person name="Collins M."/>
            <person name="Connor R."/>
            <person name="Cronin A."/>
            <person name="Davis P."/>
            <person name="Feltwell T."/>
            <person name="Fraser A."/>
            <person name="Gentles S."/>
            <person name="Goble A."/>
            <person name="Hamlin N."/>
            <person name="Harris D.E."/>
            <person name="Hidalgo J."/>
            <person name="Hodgson G."/>
            <person name="Holroyd S."/>
            <person name="Hornsby T."/>
            <person name="Howarth S."/>
            <person name="Huckle E.J."/>
            <person name="Hunt S."/>
            <person name="Jagels K."/>
            <person name="James K.D."/>
            <person name="Jones L."/>
            <person name="Jones M."/>
            <person name="Leather S."/>
            <person name="McDonald S."/>
            <person name="McLean J."/>
            <person name="Mooney P."/>
            <person name="Moule S."/>
            <person name="Mungall K.L."/>
            <person name="Murphy L.D."/>
            <person name="Niblett D."/>
            <person name="Odell C."/>
            <person name="Oliver K."/>
            <person name="O'Neil S."/>
            <person name="Pearson D."/>
            <person name="Quail M.A."/>
            <person name="Rabbinowitsch E."/>
            <person name="Rutherford K.M."/>
            <person name="Rutter S."/>
            <person name="Saunders D."/>
            <person name="Seeger K."/>
            <person name="Sharp S."/>
            <person name="Skelton J."/>
            <person name="Simmonds M.N."/>
            <person name="Squares R."/>
            <person name="Squares S."/>
            <person name="Stevens K."/>
            <person name="Taylor K."/>
            <person name="Taylor R.G."/>
            <person name="Tivey A."/>
            <person name="Walsh S.V."/>
            <person name="Warren T."/>
            <person name="Whitehead S."/>
            <person name="Woodward J.R."/>
            <person name="Volckaert G."/>
            <person name="Aert R."/>
            <person name="Robben J."/>
            <person name="Grymonprez B."/>
            <person name="Weltjens I."/>
            <person name="Vanstreels E."/>
            <person name="Rieger M."/>
            <person name="Schaefer M."/>
            <person name="Mueller-Auer S."/>
            <person name="Gabel C."/>
            <person name="Fuchs M."/>
            <person name="Duesterhoeft A."/>
            <person name="Fritzc C."/>
            <person name="Holzer E."/>
            <person name="Moestl D."/>
            <person name="Hilbert H."/>
            <person name="Borzym K."/>
            <person name="Langer I."/>
            <person name="Beck A."/>
            <person name="Lehrach H."/>
            <person name="Reinhardt R."/>
            <person name="Pohl T.M."/>
            <person name="Eger P."/>
            <person name="Zimmermann W."/>
            <person name="Wedler H."/>
            <person name="Wambutt R."/>
            <person name="Purnelle B."/>
            <person name="Goffeau A."/>
            <person name="Cadieu E."/>
            <person name="Dreano S."/>
            <person name="Gloux S."/>
            <person name="Lelaure V."/>
            <person name="Mottier S."/>
            <person name="Galibert F."/>
            <person name="Aves S.J."/>
            <person name="Xiang Z."/>
            <person name="Hunt C."/>
            <person name="Moore K."/>
            <person name="Hurst S.M."/>
            <person name="Lucas M."/>
            <person name="Rochet M."/>
            <person name="Gaillardin C."/>
            <person name="Tallada V.A."/>
            <person name="Garzon A."/>
            <person name="Thode G."/>
            <person name="Daga R.R."/>
            <person name="Cruzado L."/>
            <person name="Jimenez J."/>
            <person name="Sanchez M."/>
            <person name="del Rey F."/>
            <person name="Benito J."/>
            <person name="Dominguez A."/>
            <person name="Revuelta J.L."/>
            <person name="Moreno S."/>
            <person name="Armstrong J."/>
            <person name="Forsburg S.L."/>
            <person name="Cerutti L."/>
            <person name="Lowe T."/>
            <person name="McCombie W.R."/>
            <person name="Paulsen I."/>
            <person name="Potashkin J."/>
            <person name="Shpakovski G.V."/>
            <person name="Ussery D."/>
            <person name="Barrell B.G."/>
            <person name="Nurse P."/>
        </authorList>
    </citation>
    <scope>NUCLEOTIDE SEQUENCE [LARGE SCALE GENOMIC DNA]</scope>
    <source>
        <strain>972 / ATCC 24843</strain>
    </source>
</reference>
<reference key="2">
    <citation type="journal article" date="2002" name="Nat. Genet.">
        <title>The transcriptional program of meiosis and sporulation in fission yeast.</title>
        <authorList>
            <person name="Mata J."/>
            <person name="Lyne R."/>
            <person name="Burns G."/>
            <person name="Baehler J."/>
        </authorList>
    </citation>
    <scope>FUNCTION IN MEIOSIS</scope>
</reference>
<reference key="3">
    <citation type="journal article" date="2005" name="Curr. Biol.">
        <title>Novel genes required for meiotic chromosome segregation are identified by a high-throughput knockout screen in fission yeast.</title>
        <authorList>
            <person name="Gregan J."/>
            <person name="Rabitsch P.K."/>
            <person name="Sakem B."/>
            <person name="Csutak O."/>
            <person name="Latypov V."/>
            <person name="Lehmann E."/>
            <person name="Kohli J."/>
            <person name="Nasmyth K."/>
        </authorList>
    </citation>
    <scope>FUNCTION IN CHROMOSOME SEGREGATION</scope>
</reference>
<reference key="4">
    <citation type="journal article" date="2006" name="Nat. Biotechnol.">
        <title>ORFeome cloning and global analysis of protein localization in the fission yeast Schizosaccharomyces pombe.</title>
        <authorList>
            <person name="Matsuyama A."/>
            <person name="Arai R."/>
            <person name="Yashiroda Y."/>
            <person name="Shirai A."/>
            <person name="Kamata A."/>
            <person name="Sekido S."/>
            <person name="Kobayashi Y."/>
            <person name="Hashimoto A."/>
            <person name="Hamamoto M."/>
            <person name="Hiraoka Y."/>
            <person name="Horinouchi S."/>
            <person name="Yoshida M."/>
        </authorList>
    </citation>
    <scope>SUBCELLULAR LOCATION [LARGE SCALE ANALYSIS]</scope>
</reference>
<feature type="chain" id="PRO_0000358937" description="Meiotically up-regulated protein C1442.13c">
    <location>
        <begin position="1"/>
        <end position="187"/>
    </location>
</feature>
<feature type="domain" description="G-patch" evidence="1">
    <location>
        <begin position="145"/>
        <end position="187"/>
    </location>
</feature>
<feature type="region of interest" description="Disordered" evidence="2">
    <location>
        <begin position="15"/>
        <end position="46"/>
    </location>
</feature>
<feature type="region of interest" description="Disordered" evidence="2">
    <location>
        <begin position="119"/>
        <end position="145"/>
    </location>
</feature>
<feature type="compositionally biased region" description="Basic residues" evidence="2">
    <location>
        <begin position="26"/>
        <end position="41"/>
    </location>
</feature>
<evidence type="ECO:0000255" key="1">
    <source>
        <dbReference type="PROSITE-ProRule" id="PRU00092"/>
    </source>
</evidence>
<evidence type="ECO:0000256" key="2">
    <source>
        <dbReference type="SAM" id="MobiDB-lite"/>
    </source>
</evidence>
<evidence type="ECO:0000269" key="3">
    <source>
    </source>
</evidence>
<evidence type="ECO:0000269" key="4">
    <source>
    </source>
</evidence>
<evidence type="ECO:0000269" key="5">
    <source>
    </source>
</evidence>
<proteinExistence type="evidence at protein level"/>
<gene>
    <name type="ORF">SPCC1442.13c</name>
</gene>
<name>YQ7D_SCHPO</name>
<keyword id="KW-0131">Cell cycle</keyword>
<keyword id="KW-0963">Cytoplasm</keyword>
<keyword id="KW-0206">Cytoskeleton</keyword>
<keyword id="KW-0469">Meiosis</keyword>
<keyword id="KW-0539">Nucleus</keyword>
<keyword id="KW-1185">Reference proteome</keyword>
<accession>O94585</accession>
<dbReference type="EMBL" id="CU329672">
    <property type="protein sequence ID" value="CAA21447.3"/>
    <property type="molecule type" value="Genomic_DNA"/>
</dbReference>
<dbReference type="PIR" id="T40978">
    <property type="entry name" value="T40978"/>
</dbReference>
<dbReference type="BioGRID" id="275893">
    <property type="interactions" value="6"/>
</dbReference>
<dbReference type="STRING" id="284812.O94585"/>
<dbReference type="iPTMnet" id="O94585"/>
<dbReference type="PaxDb" id="4896-SPCC1442.13c.1"/>
<dbReference type="EnsemblFungi" id="SPCC1442.13c.1">
    <property type="protein sequence ID" value="SPCC1442.13c.1:pep"/>
    <property type="gene ID" value="SPCC1442.13c"/>
</dbReference>
<dbReference type="KEGG" id="spo:2539327"/>
<dbReference type="PomBase" id="SPCC1442.13c"/>
<dbReference type="VEuPathDB" id="FungiDB:SPCC1442.13c"/>
<dbReference type="eggNOG" id="KOG0154">
    <property type="taxonomic scope" value="Eukaryota"/>
</dbReference>
<dbReference type="HOGENOM" id="CLU_1448519_0_0_1"/>
<dbReference type="InParanoid" id="O94585"/>
<dbReference type="OMA" id="ARNDYME"/>
<dbReference type="PhylomeDB" id="O94585"/>
<dbReference type="PRO" id="PR:O94585"/>
<dbReference type="Proteomes" id="UP000002485">
    <property type="component" value="Chromosome III"/>
</dbReference>
<dbReference type="GO" id="GO:0005737">
    <property type="term" value="C:cytoplasm"/>
    <property type="evidence" value="ECO:0007669"/>
    <property type="project" value="UniProtKB-KW"/>
</dbReference>
<dbReference type="GO" id="GO:0072686">
    <property type="term" value="C:mitotic spindle"/>
    <property type="evidence" value="ECO:0007005"/>
    <property type="project" value="PomBase"/>
</dbReference>
<dbReference type="GO" id="GO:0044732">
    <property type="term" value="C:mitotic spindle pole body"/>
    <property type="evidence" value="ECO:0007005"/>
    <property type="project" value="PomBase"/>
</dbReference>
<dbReference type="GO" id="GO:0005634">
    <property type="term" value="C:nucleus"/>
    <property type="evidence" value="ECO:0007005"/>
    <property type="project" value="PomBase"/>
</dbReference>
<dbReference type="GO" id="GO:0003676">
    <property type="term" value="F:nucleic acid binding"/>
    <property type="evidence" value="ECO:0007669"/>
    <property type="project" value="InterPro"/>
</dbReference>
<dbReference type="GO" id="GO:0051321">
    <property type="term" value="P:meiotic cell cycle"/>
    <property type="evidence" value="ECO:0007669"/>
    <property type="project" value="UniProtKB-KW"/>
</dbReference>
<dbReference type="GO" id="GO:0042254">
    <property type="term" value="P:ribosome biogenesis"/>
    <property type="evidence" value="ECO:0000266"/>
    <property type="project" value="PomBase"/>
</dbReference>
<dbReference type="InterPro" id="IPR000467">
    <property type="entry name" value="G_patch_dom"/>
</dbReference>
<dbReference type="InterPro" id="IPR051189">
    <property type="entry name" value="Splicing_assoc_domain"/>
</dbReference>
<dbReference type="PANTHER" id="PTHR14195">
    <property type="entry name" value="G PATCH DOMAIN CONTAINING PROTEIN 2"/>
    <property type="match status" value="1"/>
</dbReference>
<dbReference type="Pfam" id="PF01585">
    <property type="entry name" value="G-patch"/>
    <property type="match status" value="1"/>
</dbReference>
<dbReference type="SMART" id="SM00443">
    <property type="entry name" value="G_patch"/>
    <property type="match status" value="1"/>
</dbReference>
<dbReference type="PROSITE" id="PS50174">
    <property type="entry name" value="G_PATCH"/>
    <property type="match status" value="1"/>
</dbReference>